<proteinExistence type="inferred from homology"/>
<protein>
    <recommendedName>
        <fullName evidence="1">Exodeoxyribonuclease 7 small subunit</fullName>
        <ecNumber evidence="1">3.1.11.6</ecNumber>
    </recommendedName>
    <alternativeName>
        <fullName evidence="1">Exodeoxyribonuclease VII small subunit</fullName>
        <shortName evidence="1">Exonuclease VII small subunit</shortName>
    </alternativeName>
</protein>
<comment type="function">
    <text evidence="1">Bidirectionally degrades single-stranded DNA into large acid-insoluble oligonucleotides, which are then degraded further into small acid-soluble oligonucleotides.</text>
</comment>
<comment type="catalytic activity">
    <reaction evidence="1">
        <text>Exonucleolytic cleavage in either 5'- to 3'- or 3'- to 5'-direction to yield nucleoside 5'-phosphates.</text>
        <dbReference type="EC" id="3.1.11.6"/>
    </reaction>
</comment>
<comment type="subunit">
    <text evidence="1">Heterooligomer composed of large and small subunits.</text>
</comment>
<comment type="subcellular location">
    <subcellularLocation>
        <location evidence="1">Cytoplasm</location>
    </subcellularLocation>
</comment>
<comment type="similarity">
    <text evidence="1">Belongs to the XseB family.</text>
</comment>
<reference key="1">
    <citation type="journal article" date="2009" name="Infect. Immun.">
        <title>Comparative genomics reveal extensive transposon-mediated genomic plasticity and diversity among potential effector proteins within the genus Coxiella.</title>
        <authorList>
            <person name="Beare P.A."/>
            <person name="Unsworth N."/>
            <person name="Andoh M."/>
            <person name="Voth D.E."/>
            <person name="Omsland A."/>
            <person name="Gilk S.D."/>
            <person name="Williams K.P."/>
            <person name="Sobral B.W."/>
            <person name="Kupko J.J. III"/>
            <person name="Porcella S.F."/>
            <person name="Samuel J.E."/>
            <person name="Heinzen R.A."/>
        </authorList>
    </citation>
    <scope>NUCLEOTIDE SEQUENCE [LARGE SCALE GENOMIC DNA]</scope>
    <source>
        <strain>CbuK_Q154</strain>
    </source>
</reference>
<sequence length="82" mass="9226">MPRKKTENFNFEASLNELTALVEKLEQGDLTLEESLQNFERGVGLVRSCQQALSDAEQKVKVLINQDGAETLVPFELETKTD</sequence>
<evidence type="ECO:0000255" key="1">
    <source>
        <dbReference type="HAMAP-Rule" id="MF_00337"/>
    </source>
</evidence>
<name>EX7S_COXB1</name>
<accession>B6J8G8</accession>
<organism>
    <name type="scientific">Coxiella burnetii (strain CbuK_Q154)</name>
    <name type="common">Coxiella burnetii (strain Q154)</name>
    <dbReference type="NCBI Taxonomy" id="434924"/>
    <lineage>
        <taxon>Bacteria</taxon>
        <taxon>Pseudomonadati</taxon>
        <taxon>Pseudomonadota</taxon>
        <taxon>Gammaproteobacteria</taxon>
        <taxon>Legionellales</taxon>
        <taxon>Coxiellaceae</taxon>
        <taxon>Coxiella</taxon>
    </lineage>
</organism>
<gene>
    <name evidence="1" type="primary">xseB</name>
    <name type="ordered locus">CbuK_1392</name>
</gene>
<keyword id="KW-0963">Cytoplasm</keyword>
<keyword id="KW-0269">Exonuclease</keyword>
<keyword id="KW-0378">Hydrolase</keyword>
<keyword id="KW-0540">Nuclease</keyword>
<dbReference type="EC" id="3.1.11.6" evidence="1"/>
<dbReference type="EMBL" id="CP001020">
    <property type="protein sequence ID" value="ACJ20567.1"/>
    <property type="molecule type" value="Genomic_DNA"/>
</dbReference>
<dbReference type="RefSeq" id="WP_005771337.1">
    <property type="nucleotide sequence ID" value="NC_011528.1"/>
</dbReference>
<dbReference type="SMR" id="B6J8G8"/>
<dbReference type="KEGG" id="cbc:CbuK_1392"/>
<dbReference type="HOGENOM" id="CLU_145918_3_3_6"/>
<dbReference type="GO" id="GO:0005829">
    <property type="term" value="C:cytosol"/>
    <property type="evidence" value="ECO:0007669"/>
    <property type="project" value="TreeGrafter"/>
</dbReference>
<dbReference type="GO" id="GO:0009318">
    <property type="term" value="C:exodeoxyribonuclease VII complex"/>
    <property type="evidence" value="ECO:0007669"/>
    <property type="project" value="InterPro"/>
</dbReference>
<dbReference type="GO" id="GO:0008855">
    <property type="term" value="F:exodeoxyribonuclease VII activity"/>
    <property type="evidence" value="ECO:0007669"/>
    <property type="project" value="UniProtKB-UniRule"/>
</dbReference>
<dbReference type="GO" id="GO:0006308">
    <property type="term" value="P:DNA catabolic process"/>
    <property type="evidence" value="ECO:0007669"/>
    <property type="project" value="UniProtKB-UniRule"/>
</dbReference>
<dbReference type="Gene3D" id="1.10.287.1040">
    <property type="entry name" value="Exonuclease VII, small subunit"/>
    <property type="match status" value="1"/>
</dbReference>
<dbReference type="HAMAP" id="MF_00337">
    <property type="entry name" value="Exonuc_7_S"/>
    <property type="match status" value="1"/>
</dbReference>
<dbReference type="InterPro" id="IPR003761">
    <property type="entry name" value="Exonuc_VII_S"/>
</dbReference>
<dbReference type="InterPro" id="IPR037004">
    <property type="entry name" value="Exonuc_VII_ssu_sf"/>
</dbReference>
<dbReference type="NCBIfam" id="NF002140">
    <property type="entry name" value="PRK00977.1-4"/>
    <property type="match status" value="1"/>
</dbReference>
<dbReference type="NCBIfam" id="TIGR01280">
    <property type="entry name" value="xseB"/>
    <property type="match status" value="1"/>
</dbReference>
<dbReference type="PANTHER" id="PTHR34137">
    <property type="entry name" value="EXODEOXYRIBONUCLEASE 7 SMALL SUBUNIT"/>
    <property type="match status" value="1"/>
</dbReference>
<dbReference type="PANTHER" id="PTHR34137:SF1">
    <property type="entry name" value="EXODEOXYRIBONUCLEASE 7 SMALL SUBUNIT"/>
    <property type="match status" value="1"/>
</dbReference>
<dbReference type="Pfam" id="PF02609">
    <property type="entry name" value="Exonuc_VII_S"/>
    <property type="match status" value="1"/>
</dbReference>
<dbReference type="PIRSF" id="PIRSF006488">
    <property type="entry name" value="Exonuc_VII_S"/>
    <property type="match status" value="1"/>
</dbReference>
<dbReference type="SUPFAM" id="SSF116842">
    <property type="entry name" value="XseB-like"/>
    <property type="match status" value="1"/>
</dbReference>
<feature type="chain" id="PRO_1000119917" description="Exodeoxyribonuclease 7 small subunit">
    <location>
        <begin position="1"/>
        <end position="82"/>
    </location>
</feature>